<organism>
    <name type="scientific">Haloferax volcanii (strain ATCC 29605 / DSM 3757 / JCM 8879 / NBRC 14742 / NCIMB 2012 / VKM B-1768 / DS2)</name>
    <name type="common">Halobacterium volcanii</name>
    <dbReference type="NCBI Taxonomy" id="309800"/>
    <lineage>
        <taxon>Archaea</taxon>
        <taxon>Methanobacteriati</taxon>
        <taxon>Methanobacteriota</taxon>
        <taxon>Stenosarchaea group</taxon>
        <taxon>Halobacteria</taxon>
        <taxon>Halobacteriales</taxon>
        <taxon>Haloferacaceae</taxon>
        <taxon>Haloferax</taxon>
    </lineage>
</organism>
<evidence type="ECO:0000250" key="1"/>
<evidence type="ECO:0000269" key="2">
    <source>
    </source>
</evidence>
<evidence type="ECO:0000269" key="3">
    <source>
    </source>
</evidence>
<evidence type="ECO:0000305" key="4"/>
<proteinExistence type="evidence at protein level"/>
<accession>Q59468</accession>
<accession>D4GU18</accession>
<dbReference type="EC" id="1.1.1.34"/>
<dbReference type="EMBL" id="M83531">
    <property type="protein sequence ID" value="AAA73174.1"/>
    <property type="molecule type" value="Genomic_DNA"/>
</dbReference>
<dbReference type="EMBL" id="CP001956">
    <property type="protein sequence ID" value="ADE02906.1"/>
    <property type="molecule type" value="Genomic_DNA"/>
</dbReference>
<dbReference type="PIR" id="A42149">
    <property type="entry name" value="A42149"/>
</dbReference>
<dbReference type="RefSeq" id="WP_004042652.1">
    <property type="nucleotide sequence ID" value="NC_013967.1"/>
</dbReference>
<dbReference type="SMR" id="Q59468"/>
<dbReference type="STRING" id="309800.HVO_2583"/>
<dbReference type="PaxDb" id="309800-C498_08195"/>
<dbReference type="EnsemblBacteria" id="ADE02906">
    <property type="protein sequence ID" value="ADE02906"/>
    <property type="gene ID" value="HVO_2583"/>
</dbReference>
<dbReference type="GeneID" id="8926248"/>
<dbReference type="KEGG" id="hvo:HVO_2583"/>
<dbReference type="eggNOG" id="arCOG04260">
    <property type="taxonomic scope" value="Archaea"/>
</dbReference>
<dbReference type="HOGENOM" id="CLU_001734_2_2_2"/>
<dbReference type="OrthoDB" id="10981at2157"/>
<dbReference type="BioCyc" id="MetaCyc:MONOMER-21127"/>
<dbReference type="BRENDA" id="1.1.1.34">
    <property type="organism ID" value="2561"/>
</dbReference>
<dbReference type="UniPathway" id="UPA00058">
    <property type="reaction ID" value="UER00103"/>
</dbReference>
<dbReference type="Proteomes" id="UP000008243">
    <property type="component" value="Chromosome"/>
</dbReference>
<dbReference type="GO" id="GO:0004420">
    <property type="term" value="F:hydroxymethylglutaryl-CoA reductase (NADPH) activity"/>
    <property type="evidence" value="ECO:0007669"/>
    <property type="project" value="UniProtKB-EC"/>
</dbReference>
<dbReference type="GO" id="GO:0015936">
    <property type="term" value="P:coenzyme A metabolic process"/>
    <property type="evidence" value="ECO:0007669"/>
    <property type="project" value="InterPro"/>
</dbReference>
<dbReference type="GO" id="GO:0008299">
    <property type="term" value="P:isoprenoid biosynthetic process"/>
    <property type="evidence" value="ECO:0007669"/>
    <property type="project" value="UniProtKB-KW"/>
</dbReference>
<dbReference type="GO" id="GO:0016126">
    <property type="term" value="P:sterol biosynthetic process"/>
    <property type="evidence" value="ECO:0007669"/>
    <property type="project" value="TreeGrafter"/>
</dbReference>
<dbReference type="CDD" id="cd00643">
    <property type="entry name" value="HMG-CoA_reductase_classI"/>
    <property type="match status" value="1"/>
</dbReference>
<dbReference type="FunFam" id="3.30.70.420:FF:000001">
    <property type="entry name" value="3-hydroxy-3-methylglutaryl coenzyme A reductase"/>
    <property type="match status" value="1"/>
</dbReference>
<dbReference type="Gene3D" id="3.90.770.10">
    <property type="entry name" value="3-hydroxy-3-methylglutaryl-coenzyme A Reductase, Chain A, domain 2"/>
    <property type="match status" value="1"/>
</dbReference>
<dbReference type="Gene3D" id="3.30.70.420">
    <property type="entry name" value="Hydroxymethylglutaryl-CoA reductase, class I/II, NAD/NADP-binding domain"/>
    <property type="match status" value="1"/>
</dbReference>
<dbReference type="InterPro" id="IPR002202">
    <property type="entry name" value="HMG_CoA_Rdtase"/>
</dbReference>
<dbReference type="InterPro" id="IPR023074">
    <property type="entry name" value="HMG_CoA_Rdtase_cat_sf"/>
</dbReference>
<dbReference type="InterPro" id="IPR023076">
    <property type="entry name" value="HMG_CoA_Rdtase_CS"/>
</dbReference>
<dbReference type="InterPro" id="IPR004554">
    <property type="entry name" value="HMG_CoA_Rdtase_eu_arc"/>
</dbReference>
<dbReference type="InterPro" id="IPR009023">
    <property type="entry name" value="HMG_CoA_Rdtase_NAD(P)-bd_sf"/>
</dbReference>
<dbReference type="InterPro" id="IPR009029">
    <property type="entry name" value="HMG_CoA_Rdtase_sub-bd_dom_sf"/>
</dbReference>
<dbReference type="NCBIfam" id="TIGR00533">
    <property type="entry name" value="HMG_CoA_R_NADP"/>
    <property type="match status" value="1"/>
</dbReference>
<dbReference type="PANTHER" id="PTHR10572">
    <property type="entry name" value="3-HYDROXY-3-METHYLGLUTARYL-COENZYME A REDUCTASE"/>
    <property type="match status" value="1"/>
</dbReference>
<dbReference type="PANTHER" id="PTHR10572:SF24">
    <property type="entry name" value="3-HYDROXY-3-METHYLGLUTARYL-COENZYME A REDUCTASE"/>
    <property type="match status" value="1"/>
</dbReference>
<dbReference type="Pfam" id="PF00368">
    <property type="entry name" value="HMG-CoA_red"/>
    <property type="match status" value="1"/>
</dbReference>
<dbReference type="PRINTS" id="PR00071">
    <property type="entry name" value="HMGCOARDTASE"/>
</dbReference>
<dbReference type="SUPFAM" id="SSF55035">
    <property type="entry name" value="NAD-binding domain of HMG-CoA reductase"/>
    <property type="match status" value="1"/>
</dbReference>
<dbReference type="SUPFAM" id="SSF56542">
    <property type="entry name" value="Substrate-binding domain of HMG-CoA reductase"/>
    <property type="match status" value="1"/>
</dbReference>
<dbReference type="PROSITE" id="PS00066">
    <property type="entry name" value="HMG_COA_REDUCTASE_1"/>
    <property type="match status" value="1"/>
</dbReference>
<dbReference type="PROSITE" id="PS00318">
    <property type="entry name" value="HMG_COA_REDUCTASE_2"/>
    <property type="match status" value="1"/>
</dbReference>
<dbReference type="PROSITE" id="PS50065">
    <property type="entry name" value="HMG_COA_REDUCTASE_4"/>
    <property type="match status" value="1"/>
</dbReference>
<protein>
    <recommendedName>
        <fullName>3-hydroxy-3-methylglutaryl-coenzyme A reductase</fullName>
        <shortName>HMG-CoA reductase</shortName>
        <shortName>HMGR</shortName>
        <ecNumber>1.1.1.34</ecNumber>
    </recommendedName>
</protein>
<sequence>MTDAASLADRVREGDLRLHELEAHADADTAAEARRLLVESQSGASLDAVGNYGFPAEAAESAIENMVGSIQVPMGVAGPVSVDGGSVAGEKYLPLATTEGALLASVNRGCSVINSAGGATARVLKSGMTRAPVFRVADVAEAEALVSWTRDNFAALKEAAEETTNHGELLDVTPYVVGNSVYLRFRYDTKDAMGMNMATIATEAVCGVVEAETAASLVALSGNLCSDKKPAAINAVEGRGRSVTADVRIPREVVEERLHTTPEAVAELNTRKNLVGSAKAASLGFNAHVANVVAAMFLATGQDEAQVVEGANAITTAEVQDGDLYVSVSIASLEVGTVGGGTKLPTQSEGLDILGVSGGGDPAGSNADALAECIAVGSLAGELSLLSALASRHLSSAHAELGR</sequence>
<keyword id="KW-0903">Direct protein sequencing</keyword>
<keyword id="KW-0414">Isoprene biosynthesis</keyword>
<keyword id="KW-0444">Lipid biosynthesis</keyword>
<keyword id="KW-0443">Lipid metabolism</keyword>
<keyword id="KW-0521">NADP</keyword>
<keyword id="KW-0560">Oxidoreductase</keyword>
<keyword id="KW-1185">Reference proteome</keyword>
<gene>
    <name type="primary">hmgA</name>
    <name type="synonym">hmg</name>
    <name type="synonym">hmgR</name>
    <name type="ordered locus">HVO_2583</name>
</gene>
<name>HMDH_HALVD</name>
<comment type="function">
    <text evidence="2 3">Catalyzes the NADPH-dependent reductive deacylation of (S)-3-hydroxy-3-methylglutaryl-CoA (HMG-CoA) to (R)-mevalonate. Functions in the mevalonate (MVA) pathway leading to isopentenyl diphosphate (IPP), a key precursor for the biosynthesis of isoprenoid compounds such as archaeal membrane lipids. Is also able to catalyze the reduction of mevaldehyde to mevalonate and the oxidative acylation of mevaldehyde to HMG-CoA.</text>
</comment>
<comment type="catalytic activity">
    <reaction evidence="3">
        <text>(R)-mevalonate + 2 NADP(+) + CoA = (3S)-3-hydroxy-3-methylglutaryl-CoA + 2 NADPH + 2 H(+)</text>
        <dbReference type="Rhea" id="RHEA:15989"/>
        <dbReference type="ChEBI" id="CHEBI:15378"/>
        <dbReference type="ChEBI" id="CHEBI:36464"/>
        <dbReference type="ChEBI" id="CHEBI:43074"/>
        <dbReference type="ChEBI" id="CHEBI:57287"/>
        <dbReference type="ChEBI" id="CHEBI:57783"/>
        <dbReference type="ChEBI" id="CHEBI:58349"/>
        <dbReference type="EC" id="1.1.1.34"/>
    </reaction>
</comment>
<comment type="activity regulation">
    <text evidence="3">Is competitively inhibited by (R)-HMG-CoA and lovastatin (formerly called mevinolin).</text>
</comment>
<comment type="biophysicochemical properties">
    <kinetics>
        <KM evidence="3">46 uM for (S)-HMG-CoA</KM>
        <KM evidence="3">66 uM for NADPH</KM>
        <Vmax evidence="3">34.0 umol/min/mg enzyme for the reductive deacylation of HMG-CoA</Vmax>
    </kinetics>
    <phDependence>
        <text evidence="3">Optimum pH is 7.3 for the reductive deacylation of HMG-CoA (in the presence of 3 M KCl).</text>
    </phDependence>
</comment>
<comment type="pathway">
    <text evidence="3">Metabolic intermediate biosynthesis; (R)-mevalonate biosynthesis; (R)-mevalonate from acetyl-CoA: step 3/3.</text>
</comment>
<comment type="induction">
    <text evidence="2">Up-regulated during growth at high salinity.</text>
</comment>
<comment type="similarity">
    <text evidence="4">Belongs to the HMG-CoA reductase family.</text>
</comment>
<reference key="1">
    <citation type="journal article" date="1992" name="J. Biol. Chem.">
        <title>Mevinolin-resistant mutations identify a promoter and the gene for a eukaryote-like 3-hydroxy-3-methylglutaryl-coenzyme A reductase in the archaebacterium Haloferax volcanii.</title>
        <authorList>
            <person name="Lam W.L."/>
            <person name="Doolittle W.F."/>
        </authorList>
    </citation>
    <scope>NUCLEOTIDE SEQUENCE [GENOMIC DNA]</scope>
    <source>
        <strain>DS2 / DSM 5716 / WFD11</strain>
    </source>
</reference>
<reference key="2">
    <citation type="journal article" date="2010" name="PLoS ONE">
        <title>The complete genome sequence of Haloferax volcanii DS2, a model archaeon.</title>
        <authorList>
            <person name="Hartman A.L."/>
            <person name="Norais C."/>
            <person name="Badger J.H."/>
            <person name="Delmas S."/>
            <person name="Haldenby S."/>
            <person name="Madupu R."/>
            <person name="Robinson J."/>
            <person name="Khouri H."/>
            <person name="Ren Q."/>
            <person name="Lowe T.M."/>
            <person name="Maupin-Furlow J."/>
            <person name="Pohlschroder M."/>
            <person name="Daniels C."/>
            <person name="Pfeiffer F."/>
            <person name="Allers T."/>
            <person name="Eisen J.A."/>
        </authorList>
    </citation>
    <scope>NUCLEOTIDE SEQUENCE [LARGE SCALE GENOMIC DNA]</scope>
    <source>
        <strain>ATCC 29605 / DSM 3757 / JCM 8879 / NBRC 14742 / NCIMB 2012 / VKM B-1768 / DS2</strain>
    </source>
</reference>
<reference key="3">
    <citation type="journal article" date="2007" name="Extremophiles">
        <title>HMG-CoA reductase is regulated by salinity at the level of transcription in Haloferax volcanii.</title>
        <authorList>
            <person name="Bidle K.A."/>
            <person name="Hanson T.E."/>
            <person name="Howell K."/>
            <person name="Nannen J."/>
        </authorList>
    </citation>
    <scope>PROTEIN SEQUENCE OF N-TERMINUS</scope>
    <scope>FUNCTION</scope>
    <scope>INDUCTION</scope>
    <scope>IDENTIFICATION BY MASS SPECTROMETRY</scope>
    <source>
        <strain>DS2 / DSM 5716 / WFD11</strain>
    </source>
</reference>
<reference key="4">
    <citation type="journal article" date="1996" name="J. Bacteriol.">
        <title>3-Hydroxy-3-methylglutaryl-coenzyme A reductase from Haloferax volcanii: purification, characterization, and expression in Escherichia coli.</title>
        <authorList>
            <person name="Bischoff K.M."/>
            <person name="Rodwell V.W."/>
        </authorList>
    </citation>
    <scope>FUNCTION</scope>
    <scope>CATALYTIC ACTIVITY</scope>
    <scope>BIOPHYSICOCHEMICAL PROPERTIES</scope>
    <scope>ACTIVITY REGULATION</scope>
    <scope>PATHWAY</scope>
    <source>
        <strain>DS2 / DSM 5716 / WFD11</strain>
    </source>
</reference>
<feature type="chain" id="PRO_0000114460" description="3-hydroxy-3-methylglutaryl-coenzyme A reductase">
    <location>
        <begin position="1"/>
        <end position="403"/>
    </location>
</feature>
<feature type="active site" description="Charge relay system" evidence="1">
    <location>
        <position position="99"/>
    </location>
</feature>
<feature type="active site" description="Charge relay system" evidence="1">
    <location>
        <position position="303"/>
    </location>
</feature>
<feature type="active site" description="Proton donor" evidence="1">
    <location>
        <position position="398"/>
    </location>
</feature>
<feature type="sequence conflict" description="In Ref. 1; AAA73174." evidence="4" ref="1">
    <original>AVA</original>
    <variation>RGR</variation>
    <location>
        <begin position="264"/>
        <end position="266"/>
    </location>
</feature>